<gene>
    <name type="ordered locus">Lxx10750</name>
</gene>
<reference key="1">
    <citation type="journal article" date="2004" name="Mol. Plant Microbe Interact.">
        <title>The genome sequence of the Gram-positive sugarcane pathogen Leifsonia xyli subsp. xyli.</title>
        <authorList>
            <person name="Monteiro-Vitorello C.B."/>
            <person name="Camargo L.E.A."/>
            <person name="Van Sluys M.A."/>
            <person name="Kitajima J.P."/>
            <person name="Truffi D."/>
            <person name="do Amaral A.M."/>
            <person name="Harakava R."/>
            <person name="de Oliveira J.C.F."/>
            <person name="Wood D."/>
            <person name="de Oliveira M.C."/>
            <person name="Miyaki C.Y."/>
            <person name="Takita M.A."/>
            <person name="da Silva A.C.R."/>
            <person name="Furlan L.R."/>
            <person name="Carraro D.M."/>
            <person name="Camarotte G."/>
            <person name="Almeida N.F. Jr."/>
            <person name="Carrer H."/>
            <person name="Coutinho L.L."/>
            <person name="El-Dorry H.A."/>
            <person name="Ferro M.I.T."/>
            <person name="Gagliardi P.R."/>
            <person name="Giglioti E."/>
            <person name="Goldman M.H.S."/>
            <person name="Goldman G.H."/>
            <person name="Kimura E.T."/>
            <person name="Ferro E.S."/>
            <person name="Kuramae E.E."/>
            <person name="Lemos E.G.M."/>
            <person name="Lemos M.V.F."/>
            <person name="Mauro S.M.Z."/>
            <person name="Machado M.A."/>
            <person name="Marino C.L."/>
            <person name="Menck C.F."/>
            <person name="Nunes L.R."/>
            <person name="Oliveira R.C."/>
            <person name="Pereira G.G."/>
            <person name="Siqueira W."/>
            <person name="de Souza A.A."/>
            <person name="Tsai S.M."/>
            <person name="Zanca A.S."/>
            <person name="Simpson A.J.G."/>
            <person name="Brumbley S.M."/>
            <person name="Setubal J.C."/>
        </authorList>
    </citation>
    <scope>NUCLEOTIDE SEQUENCE [LARGE SCALE GENOMIC DNA]</scope>
    <source>
        <strain>CTCB07</strain>
    </source>
</reference>
<accession>Q6AFB7</accession>
<organism>
    <name type="scientific">Leifsonia xyli subsp. xyli (strain CTCB07)</name>
    <dbReference type="NCBI Taxonomy" id="281090"/>
    <lineage>
        <taxon>Bacteria</taxon>
        <taxon>Bacillati</taxon>
        <taxon>Actinomycetota</taxon>
        <taxon>Actinomycetes</taxon>
        <taxon>Micrococcales</taxon>
        <taxon>Microbacteriaceae</taxon>
        <taxon>Leifsonia</taxon>
    </lineage>
</organism>
<name>Y1075_LEIXX</name>
<sequence>MSGHSKWATTKHKKAVIDARRAKSFAKLIKNIEVAAKIGGADLSGNPTLVDAVQKAKKTSVPNDNIDRAIKRGAGLTGESIDYTTIMYEGYGPGGVALLIECLTENKNRAAAEVRTAMTRNGGTMADPGSVAYNFHRKGVIVVPHADGVDEDAVLVAVLEAGAEEVTDLGESFEVLTEATDLVAARTALQAAGIDYDSADAEFVATVTVQTDAEAARKVFRLIDALEDSDDVQNVYTTLDLSAEVQAQLDDE</sequence>
<protein>
    <recommendedName>
        <fullName evidence="1">Probable transcriptional regulatory protein Lxx10750</fullName>
    </recommendedName>
</protein>
<comment type="subcellular location">
    <subcellularLocation>
        <location evidence="1">Cytoplasm</location>
    </subcellularLocation>
</comment>
<comment type="similarity">
    <text evidence="1">Belongs to the TACO1 family.</text>
</comment>
<feature type="chain" id="PRO_0000175831" description="Probable transcriptional regulatory protein Lxx10750">
    <location>
        <begin position="1"/>
        <end position="252"/>
    </location>
</feature>
<keyword id="KW-0963">Cytoplasm</keyword>
<keyword id="KW-0238">DNA-binding</keyword>
<keyword id="KW-1185">Reference proteome</keyword>
<keyword id="KW-0804">Transcription</keyword>
<keyword id="KW-0805">Transcription regulation</keyword>
<dbReference type="EMBL" id="AE016822">
    <property type="protein sequence ID" value="AAT88928.1"/>
    <property type="molecule type" value="Genomic_DNA"/>
</dbReference>
<dbReference type="RefSeq" id="WP_011185924.1">
    <property type="nucleotide sequence ID" value="NC_006087.1"/>
</dbReference>
<dbReference type="SMR" id="Q6AFB7"/>
<dbReference type="STRING" id="281090.Lxx10750"/>
<dbReference type="KEGG" id="lxx:Lxx10750"/>
<dbReference type="eggNOG" id="COG0217">
    <property type="taxonomic scope" value="Bacteria"/>
</dbReference>
<dbReference type="HOGENOM" id="CLU_062974_2_2_11"/>
<dbReference type="Proteomes" id="UP000001306">
    <property type="component" value="Chromosome"/>
</dbReference>
<dbReference type="GO" id="GO:0005829">
    <property type="term" value="C:cytosol"/>
    <property type="evidence" value="ECO:0007669"/>
    <property type="project" value="TreeGrafter"/>
</dbReference>
<dbReference type="GO" id="GO:0003677">
    <property type="term" value="F:DNA binding"/>
    <property type="evidence" value="ECO:0007669"/>
    <property type="project" value="UniProtKB-UniRule"/>
</dbReference>
<dbReference type="GO" id="GO:0006355">
    <property type="term" value="P:regulation of DNA-templated transcription"/>
    <property type="evidence" value="ECO:0007669"/>
    <property type="project" value="UniProtKB-UniRule"/>
</dbReference>
<dbReference type="FunFam" id="1.10.10.200:FF:000002">
    <property type="entry name" value="Probable transcriptional regulatory protein CLM62_37755"/>
    <property type="match status" value="1"/>
</dbReference>
<dbReference type="Gene3D" id="1.10.10.200">
    <property type="match status" value="1"/>
</dbReference>
<dbReference type="Gene3D" id="3.30.70.980">
    <property type="match status" value="2"/>
</dbReference>
<dbReference type="HAMAP" id="MF_00693">
    <property type="entry name" value="Transcrip_reg_TACO1"/>
    <property type="match status" value="1"/>
</dbReference>
<dbReference type="InterPro" id="IPR017856">
    <property type="entry name" value="Integrase-like_N"/>
</dbReference>
<dbReference type="InterPro" id="IPR048300">
    <property type="entry name" value="TACO1_YebC-like_2nd/3rd_dom"/>
</dbReference>
<dbReference type="InterPro" id="IPR049083">
    <property type="entry name" value="TACO1_YebC_N"/>
</dbReference>
<dbReference type="InterPro" id="IPR002876">
    <property type="entry name" value="Transcrip_reg_TACO1-like"/>
</dbReference>
<dbReference type="InterPro" id="IPR026564">
    <property type="entry name" value="Transcrip_reg_TACO1-like_dom3"/>
</dbReference>
<dbReference type="InterPro" id="IPR029072">
    <property type="entry name" value="YebC-like"/>
</dbReference>
<dbReference type="NCBIfam" id="NF001030">
    <property type="entry name" value="PRK00110.1"/>
    <property type="match status" value="1"/>
</dbReference>
<dbReference type="NCBIfam" id="NF009044">
    <property type="entry name" value="PRK12378.1"/>
    <property type="match status" value="1"/>
</dbReference>
<dbReference type="NCBIfam" id="TIGR01033">
    <property type="entry name" value="YebC/PmpR family DNA-binding transcriptional regulator"/>
    <property type="match status" value="1"/>
</dbReference>
<dbReference type="PANTHER" id="PTHR12532:SF6">
    <property type="entry name" value="TRANSCRIPTIONAL REGULATORY PROTEIN YEBC-RELATED"/>
    <property type="match status" value="1"/>
</dbReference>
<dbReference type="PANTHER" id="PTHR12532">
    <property type="entry name" value="TRANSLATIONAL ACTIVATOR OF CYTOCHROME C OXIDASE 1"/>
    <property type="match status" value="1"/>
</dbReference>
<dbReference type="Pfam" id="PF20772">
    <property type="entry name" value="TACO1_YebC_N"/>
    <property type="match status" value="1"/>
</dbReference>
<dbReference type="Pfam" id="PF01709">
    <property type="entry name" value="Transcrip_reg"/>
    <property type="match status" value="1"/>
</dbReference>
<dbReference type="SUPFAM" id="SSF75625">
    <property type="entry name" value="YebC-like"/>
    <property type="match status" value="1"/>
</dbReference>
<evidence type="ECO:0000255" key="1">
    <source>
        <dbReference type="HAMAP-Rule" id="MF_00693"/>
    </source>
</evidence>
<proteinExistence type="inferred from homology"/>